<keyword id="KW-0028">Amino-acid biosynthesis</keyword>
<keyword id="KW-0055">Arginine biosynthesis</keyword>
<keyword id="KW-0963">Cytoplasm</keyword>
<keyword id="KW-0521">NADP</keyword>
<keyword id="KW-0560">Oxidoreductase</keyword>
<reference key="1">
    <citation type="journal article" date="2003" name="Lancet">
        <title>Genome sequence of Vibrio parahaemolyticus: a pathogenic mechanism distinct from that of V. cholerae.</title>
        <authorList>
            <person name="Makino K."/>
            <person name="Oshima K."/>
            <person name="Kurokawa K."/>
            <person name="Yokoyama K."/>
            <person name="Uda T."/>
            <person name="Tagomori K."/>
            <person name="Iijima Y."/>
            <person name="Najima M."/>
            <person name="Nakano M."/>
            <person name="Yamashita A."/>
            <person name="Kubota Y."/>
            <person name="Kimura S."/>
            <person name="Yasunaga T."/>
            <person name="Honda T."/>
            <person name="Shinagawa H."/>
            <person name="Hattori M."/>
            <person name="Iida T."/>
        </authorList>
    </citation>
    <scope>NUCLEOTIDE SEQUENCE [LARGE SCALE GENOMIC DNA]</scope>
    <source>
        <strain>RIMD 2210633</strain>
    </source>
</reference>
<feature type="chain" id="PRO_0000112472" description="N-acetyl-gamma-glutamyl-phosphate reductase">
    <location>
        <begin position="1"/>
        <end position="334"/>
    </location>
</feature>
<feature type="active site" evidence="1">
    <location>
        <position position="154"/>
    </location>
</feature>
<dbReference type="EC" id="1.2.1.38" evidence="1"/>
<dbReference type="EMBL" id="BA000031">
    <property type="protein sequence ID" value="BAC61022.1"/>
    <property type="molecule type" value="Genomic_DNA"/>
</dbReference>
<dbReference type="RefSeq" id="NP_799138.1">
    <property type="nucleotide sequence ID" value="NC_004603.1"/>
</dbReference>
<dbReference type="RefSeq" id="WP_005465147.1">
    <property type="nucleotide sequence ID" value="NC_004603.1"/>
</dbReference>
<dbReference type="SMR" id="Q87L55"/>
<dbReference type="GeneID" id="1190309"/>
<dbReference type="KEGG" id="vpa:VP2759"/>
<dbReference type="PATRIC" id="fig|223926.6.peg.2655"/>
<dbReference type="eggNOG" id="COG0002">
    <property type="taxonomic scope" value="Bacteria"/>
</dbReference>
<dbReference type="HOGENOM" id="CLU_006384_0_1_6"/>
<dbReference type="UniPathway" id="UPA00068">
    <property type="reaction ID" value="UER00108"/>
</dbReference>
<dbReference type="Proteomes" id="UP000002493">
    <property type="component" value="Chromosome 1"/>
</dbReference>
<dbReference type="GO" id="GO:0005737">
    <property type="term" value="C:cytoplasm"/>
    <property type="evidence" value="ECO:0007669"/>
    <property type="project" value="UniProtKB-SubCell"/>
</dbReference>
<dbReference type="GO" id="GO:0003942">
    <property type="term" value="F:N-acetyl-gamma-glutamyl-phosphate reductase activity"/>
    <property type="evidence" value="ECO:0007669"/>
    <property type="project" value="UniProtKB-UniRule"/>
</dbReference>
<dbReference type="GO" id="GO:0051287">
    <property type="term" value="F:NAD binding"/>
    <property type="evidence" value="ECO:0007669"/>
    <property type="project" value="InterPro"/>
</dbReference>
<dbReference type="GO" id="GO:0070401">
    <property type="term" value="F:NADP+ binding"/>
    <property type="evidence" value="ECO:0007669"/>
    <property type="project" value="InterPro"/>
</dbReference>
<dbReference type="GO" id="GO:0006526">
    <property type="term" value="P:L-arginine biosynthetic process"/>
    <property type="evidence" value="ECO:0007669"/>
    <property type="project" value="UniProtKB-UniRule"/>
</dbReference>
<dbReference type="CDD" id="cd23934">
    <property type="entry name" value="AGPR_1_C"/>
    <property type="match status" value="1"/>
</dbReference>
<dbReference type="CDD" id="cd17895">
    <property type="entry name" value="AGPR_1_N"/>
    <property type="match status" value="1"/>
</dbReference>
<dbReference type="FunFam" id="3.30.360.10:FF:000014">
    <property type="entry name" value="N-acetyl-gamma-glutamyl-phosphate reductase"/>
    <property type="match status" value="1"/>
</dbReference>
<dbReference type="FunFam" id="3.40.50.720:FF:000117">
    <property type="entry name" value="N-acetyl-gamma-glutamyl-phosphate reductase"/>
    <property type="match status" value="1"/>
</dbReference>
<dbReference type="Gene3D" id="3.30.360.10">
    <property type="entry name" value="Dihydrodipicolinate Reductase, domain 2"/>
    <property type="match status" value="1"/>
</dbReference>
<dbReference type="Gene3D" id="3.40.50.720">
    <property type="entry name" value="NAD(P)-binding Rossmann-like Domain"/>
    <property type="match status" value="1"/>
</dbReference>
<dbReference type="HAMAP" id="MF_00150">
    <property type="entry name" value="ArgC_type1"/>
    <property type="match status" value="1"/>
</dbReference>
<dbReference type="InterPro" id="IPR023013">
    <property type="entry name" value="AGPR_AS"/>
</dbReference>
<dbReference type="InterPro" id="IPR000706">
    <property type="entry name" value="AGPR_type-1"/>
</dbReference>
<dbReference type="InterPro" id="IPR036291">
    <property type="entry name" value="NAD(P)-bd_dom_sf"/>
</dbReference>
<dbReference type="InterPro" id="IPR050085">
    <property type="entry name" value="NAGSA_dehydrogenase"/>
</dbReference>
<dbReference type="InterPro" id="IPR000534">
    <property type="entry name" value="Semialdehyde_DH_NAD-bd"/>
</dbReference>
<dbReference type="NCBIfam" id="TIGR01850">
    <property type="entry name" value="argC"/>
    <property type="match status" value="1"/>
</dbReference>
<dbReference type="PANTHER" id="PTHR32338:SF10">
    <property type="entry name" value="N-ACETYL-GAMMA-GLUTAMYL-PHOSPHATE REDUCTASE, CHLOROPLASTIC-RELATED"/>
    <property type="match status" value="1"/>
</dbReference>
<dbReference type="PANTHER" id="PTHR32338">
    <property type="entry name" value="N-ACETYL-GAMMA-GLUTAMYL-PHOSPHATE REDUCTASE, CHLOROPLASTIC-RELATED-RELATED"/>
    <property type="match status" value="1"/>
</dbReference>
<dbReference type="Pfam" id="PF01118">
    <property type="entry name" value="Semialdhyde_dh"/>
    <property type="match status" value="1"/>
</dbReference>
<dbReference type="Pfam" id="PF22698">
    <property type="entry name" value="Semialdhyde_dhC_1"/>
    <property type="match status" value="1"/>
</dbReference>
<dbReference type="SMART" id="SM00859">
    <property type="entry name" value="Semialdhyde_dh"/>
    <property type="match status" value="1"/>
</dbReference>
<dbReference type="SUPFAM" id="SSF55347">
    <property type="entry name" value="Glyceraldehyde-3-phosphate dehydrogenase-like, C-terminal domain"/>
    <property type="match status" value="1"/>
</dbReference>
<dbReference type="SUPFAM" id="SSF51735">
    <property type="entry name" value="NAD(P)-binding Rossmann-fold domains"/>
    <property type="match status" value="1"/>
</dbReference>
<dbReference type="PROSITE" id="PS01224">
    <property type="entry name" value="ARGC"/>
    <property type="match status" value="1"/>
</dbReference>
<sequence>MLKTTIIGASGYTGAELAFMVNKHPQLTLSGLYVSANSVDAGKTIAQLHGKLANVVDMVVNALTDPKQVAQDSDVVFLATAHEVSHDLAPIFLEAGCQVFDLSGAFRVKSDGFYDTFYGFEHQFNNWLDKAAYGLAEWNQEEIKNAPLVAVAGCYPTASQLAIKPLLVDGLLDTQQWPVINATSGVSGAGRKASMTNSFCEVSLQPYGVFNHRHQPEIAQHLGCDVIFTPHLGNFKRGILATVTMKLAQGVTEQQVAQAFEQAYQGKPAVRLKGDGIPRIQDVENTPFCDIGWKVQGEHIIVISAIDNLLKGASSQAMQCLNIHYGYPELTALL</sequence>
<gene>
    <name evidence="1" type="primary">argC</name>
    <name type="ordered locus">VP2759</name>
</gene>
<protein>
    <recommendedName>
        <fullName evidence="1">N-acetyl-gamma-glutamyl-phosphate reductase</fullName>
        <shortName evidence="1">AGPR</shortName>
        <ecNumber evidence="1">1.2.1.38</ecNumber>
    </recommendedName>
    <alternativeName>
        <fullName evidence="1">N-acetyl-glutamate semialdehyde dehydrogenase</fullName>
        <shortName evidence="1">NAGSA dehydrogenase</shortName>
    </alternativeName>
</protein>
<organism>
    <name type="scientific">Vibrio parahaemolyticus serotype O3:K6 (strain RIMD 2210633)</name>
    <dbReference type="NCBI Taxonomy" id="223926"/>
    <lineage>
        <taxon>Bacteria</taxon>
        <taxon>Pseudomonadati</taxon>
        <taxon>Pseudomonadota</taxon>
        <taxon>Gammaproteobacteria</taxon>
        <taxon>Vibrionales</taxon>
        <taxon>Vibrionaceae</taxon>
        <taxon>Vibrio</taxon>
    </lineage>
</organism>
<comment type="function">
    <text evidence="1">Catalyzes the NADPH-dependent reduction of N-acetyl-5-glutamyl phosphate to yield N-acetyl-L-glutamate 5-semialdehyde.</text>
</comment>
<comment type="catalytic activity">
    <reaction evidence="1">
        <text>N-acetyl-L-glutamate 5-semialdehyde + phosphate + NADP(+) = N-acetyl-L-glutamyl 5-phosphate + NADPH + H(+)</text>
        <dbReference type="Rhea" id="RHEA:21588"/>
        <dbReference type="ChEBI" id="CHEBI:15378"/>
        <dbReference type="ChEBI" id="CHEBI:29123"/>
        <dbReference type="ChEBI" id="CHEBI:43474"/>
        <dbReference type="ChEBI" id="CHEBI:57783"/>
        <dbReference type="ChEBI" id="CHEBI:57936"/>
        <dbReference type="ChEBI" id="CHEBI:58349"/>
        <dbReference type="EC" id="1.2.1.38"/>
    </reaction>
</comment>
<comment type="pathway">
    <text evidence="1">Amino-acid biosynthesis; L-arginine biosynthesis; N(2)-acetyl-L-ornithine from L-glutamate: step 3/4.</text>
</comment>
<comment type="subcellular location">
    <subcellularLocation>
        <location evidence="1">Cytoplasm</location>
    </subcellularLocation>
</comment>
<comment type="similarity">
    <text evidence="1">Belongs to the NAGSA dehydrogenase family. Type 1 subfamily.</text>
</comment>
<proteinExistence type="inferred from homology"/>
<accession>Q87L55</accession>
<evidence type="ECO:0000255" key="1">
    <source>
        <dbReference type="HAMAP-Rule" id="MF_00150"/>
    </source>
</evidence>
<name>ARGC_VIBPA</name>